<feature type="chain" id="PRO_0000100205" description="Nuclear factor 1 X-type">
    <location>
        <begin position="1"/>
        <end position="488"/>
    </location>
</feature>
<feature type="DNA-binding region" description="CTF/NF-I" evidence="2">
    <location>
        <begin position="1"/>
        <end position="194"/>
    </location>
</feature>
<feature type="region of interest" description="Disordered" evidence="3">
    <location>
        <begin position="264"/>
        <end position="320"/>
    </location>
</feature>
<feature type="region of interest" description="Disordered" evidence="3">
    <location>
        <begin position="411"/>
        <end position="488"/>
    </location>
</feature>
<feature type="short sequence motif" description="9aaTAD" evidence="1">
    <location>
        <begin position="398"/>
        <end position="406"/>
    </location>
</feature>
<feature type="compositionally biased region" description="Low complexity" evidence="3">
    <location>
        <begin position="264"/>
        <end position="275"/>
    </location>
</feature>
<feature type="compositionally biased region" description="Pro residues" evidence="3">
    <location>
        <begin position="433"/>
        <end position="447"/>
    </location>
</feature>
<feature type="compositionally biased region" description="Polar residues" evidence="3">
    <location>
        <begin position="468"/>
        <end position="478"/>
    </location>
</feature>
<feature type="modified residue" description="Phosphoserine" evidence="12">
    <location>
        <position position="265"/>
    </location>
</feature>
<feature type="modified residue" description="Phosphoserine" evidence="10 11 12">
    <location>
        <position position="280"/>
    </location>
</feature>
<feature type="modified residue" description="Phosphoserine" evidence="10 12">
    <location>
        <position position="288"/>
    </location>
</feature>
<feature type="modified residue" description="Phosphoserine" evidence="11 12">
    <location>
        <position position="301"/>
    </location>
</feature>
<feature type="modified residue" description="Phosphoserine" evidence="11 12">
    <location>
        <position position="341"/>
    </location>
</feature>
<feature type="modified residue" description="Asymmetric dimethylarginine" evidence="13">
    <location>
        <position position="343"/>
    </location>
</feature>
<feature type="modified residue" description="Asymmetric dimethylarginine" evidence="13">
    <location>
        <position position="390"/>
    </location>
</feature>
<feature type="cross-link" description="Glycyl lysine isopeptide (Lys-Gly) (interchain with G-Cter in SUMO2)" evidence="1">
    <location>
        <position position="279"/>
    </location>
</feature>
<feature type="splice variant" id="VSP_003563" description="In isoform NFIX2." evidence="5 7 8">
    <location>
        <begin position="320"/>
        <end position="360"/>
    </location>
</feature>
<feature type="splice variant" id="VSP_007546" description="In isoform NFIX1 and isoform NFIX2." evidence="5 6 7 8">
    <original>PNGSGQGKVPGSFLLPPPPPVAR</original>
    <variation>HSQRQAPPLPTGLSASDPGTATF</variation>
    <location>
        <begin position="419"/>
        <end position="441"/>
    </location>
</feature>
<feature type="splice variant" id="VSP_007547" description="In isoform NFIX1 and isoform NFIX2." evidence="5 6 7 8">
    <location>
        <begin position="442"/>
        <end position="488"/>
    </location>
</feature>
<feature type="sequence conflict" description="In Ref. 2; CAA68952." evidence="9" ref="2">
    <original>V</original>
    <variation>L</variation>
    <location>
        <position position="353"/>
    </location>
</feature>
<feature type="modified residue" description="Phosphoserine" evidence="12">
    <location sequence="P70257-2">
        <position position="301"/>
    </location>
</feature>
<feature type="modified residue" description="Phosphoserine" evidence="12">
    <location sequence="P70257-2">
        <position position="320"/>
    </location>
</feature>
<reference key="1">
    <citation type="journal article" date="1995" name="Cell. Mol. Biol. Res.">
        <title>NFI/X proteins: a class of NFI family of transcription factors with positive and negative regulatory domains.</title>
        <authorList>
            <person name="Nebl G."/>
            <person name="Cato A.C.B."/>
        </authorList>
    </citation>
    <scope>NUCLEOTIDE SEQUENCE [MRNA] (ISOFORMS NFIX1; NFIX2 AND NFIX3)</scope>
    <scope>FUNCTION</scope>
</reference>
<reference key="2">
    <citation type="journal article" date="2003" name="Gene">
        <title>Genomic organization, splice products and mouse chromosomal localization of genes for transcription factor Nuclear Factor One.</title>
        <authorList>
            <person name="Gruender A."/>
            <person name="Qian F."/>
            <person name="Ebel T.T."/>
            <person name="Mincheva A."/>
            <person name="Lichter P."/>
            <person name="Kruse U."/>
            <person name="Sippel A.E."/>
        </authorList>
    </citation>
    <scope>NUCLEOTIDE SEQUENCE [MRNA] (ISOFORMS NFIX1 AND NFIX2)</scope>
    <source>
        <strain>NIH Swiss</strain>
    </source>
</reference>
<reference key="3">
    <citation type="journal article" date="2004" name="Genome Res.">
        <title>The status, quality, and expansion of the NIH full-length cDNA project: the Mammalian Gene Collection (MGC).</title>
        <authorList>
            <consortium name="The MGC Project Team"/>
        </authorList>
    </citation>
    <scope>NUCLEOTIDE SEQUENCE [LARGE SCALE MRNA] (ISOFORM NFIX1)</scope>
    <source>
        <tissue>Mammary gland</tissue>
    </source>
</reference>
<reference key="4">
    <citation type="journal article" date="1997" name="Dev. Dyn.">
        <title>Expression patterns of the four nuclear factor I genes during mouse embryogenesis indicate a potential role in development.</title>
        <authorList>
            <person name="Chaudhry A.Z."/>
            <person name="Lyons G.E."/>
            <person name="Gronostajski R.M."/>
        </authorList>
    </citation>
    <scope>NUCLEOTIDE SEQUENCE [MRNA] OF 4-488 (ISOFORM NFIX2)</scope>
    <source>
        <strain>BALB/cJ</strain>
    </source>
</reference>
<reference key="5">
    <citation type="journal article" date="1999" name="Mamm. Genome">
        <title>Exon structure of the nuclear factor I DNA-binding domain from C. elegans to mammals.</title>
        <authorList>
            <person name="Fletcher C.F."/>
            <person name="Jenkins N.A."/>
            <person name="Copeland N.G."/>
            <person name="Chaudhry A.Z."/>
            <person name="Gronostajski R.M."/>
        </authorList>
    </citation>
    <scope>NUCLEOTIDE SEQUENCE [GENOMIC DNA] OF 10-186</scope>
    <source>
        <strain>129</strain>
    </source>
</reference>
<reference key="6">
    <citation type="journal article" date="2004" name="Mol. Cell. Proteomics">
        <title>Phosphoproteomic analysis of the developing mouse brain.</title>
        <authorList>
            <person name="Ballif B.A."/>
            <person name="Villen J."/>
            <person name="Beausoleil S.A."/>
            <person name="Schwartz D."/>
            <person name="Gygi S.P."/>
        </authorList>
    </citation>
    <scope>PHOSPHORYLATION [LARGE SCALE ANALYSIS] AT SER-280 AND SER-288</scope>
    <scope>IDENTIFICATION BY MASS SPECTROMETRY [LARGE SCALE ANALYSIS]</scope>
    <source>
        <tissue>Embryonic brain</tissue>
    </source>
</reference>
<reference key="7">
    <citation type="journal article" date="2007" name="Proc. Natl. Acad. Sci. U.S.A.">
        <title>Large-scale phosphorylation analysis of mouse liver.</title>
        <authorList>
            <person name="Villen J."/>
            <person name="Beausoleil S.A."/>
            <person name="Gerber S.A."/>
            <person name="Gygi S.P."/>
        </authorList>
    </citation>
    <scope>PHOSPHORYLATION [LARGE SCALE ANALYSIS] AT SER-280; SER-301 AND SER-341</scope>
    <scope>IDENTIFICATION BY MASS SPECTROMETRY [LARGE SCALE ANALYSIS]</scope>
    <source>
        <tissue>Liver</tissue>
    </source>
</reference>
<reference key="8">
    <citation type="journal article" date="2010" name="Cell">
        <title>A tissue-specific atlas of mouse protein phosphorylation and expression.</title>
        <authorList>
            <person name="Huttlin E.L."/>
            <person name="Jedrychowski M.P."/>
            <person name="Elias J.E."/>
            <person name="Goswami T."/>
            <person name="Rad R."/>
            <person name="Beausoleil S.A."/>
            <person name="Villen J."/>
            <person name="Haas W."/>
            <person name="Sowa M.E."/>
            <person name="Gygi S.P."/>
        </authorList>
    </citation>
    <scope>PHOSPHORYLATION [LARGE SCALE ANALYSIS] AT SER-265; SER-280; SER-288; SER-301 AND SER-341</scope>
    <scope>PHOSPHORYLATION [LARGE SCALE ANALYSIS] AT SER-301 AND SER-320 (ISOFORM NFIX2)</scope>
    <scope>IDENTIFICATION BY MASS SPECTROMETRY [LARGE SCALE ANALYSIS]</scope>
    <source>
        <tissue>Brain</tissue>
        <tissue>Brown adipose tissue</tissue>
        <tissue>Heart</tissue>
        <tissue>Kidney</tissue>
        <tissue>Liver</tissue>
        <tissue>Lung</tissue>
        <tissue>Pancreas</tissue>
        <tissue>Spleen</tissue>
        <tissue>Testis</tissue>
    </source>
</reference>
<reference key="9">
    <citation type="journal article" date="2014" name="Mol. Cell. Proteomics">
        <title>Immunoaffinity enrichment and mass spectrometry analysis of protein methylation.</title>
        <authorList>
            <person name="Guo A."/>
            <person name="Gu H."/>
            <person name="Zhou J."/>
            <person name="Mulhern D."/>
            <person name="Wang Y."/>
            <person name="Lee K.A."/>
            <person name="Yang V."/>
            <person name="Aguiar M."/>
            <person name="Kornhauser J."/>
            <person name="Jia X."/>
            <person name="Ren J."/>
            <person name="Beausoleil S.A."/>
            <person name="Silva J.C."/>
            <person name="Vemulapalli V."/>
            <person name="Bedford M.T."/>
            <person name="Comb M.J."/>
        </authorList>
    </citation>
    <scope>METHYLATION [LARGE SCALE ANALYSIS] AT ARG-343 AND ARG-390</scope>
    <scope>IDENTIFICATION BY MASS SPECTROMETRY [LARGE SCALE ANALYSIS]</scope>
    <source>
        <tissue>Brain</tissue>
        <tissue>Embryo</tissue>
    </source>
</reference>
<organism>
    <name type="scientific">Mus musculus</name>
    <name type="common">Mouse</name>
    <dbReference type="NCBI Taxonomy" id="10090"/>
    <lineage>
        <taxon>Eukaryota</taxon>
        <taxon>Metazoa</taxon>
        <taxon>Chordata</taxon>
        <taxon>Craniata</taxon>
        <taxon>Vertebrata</taxon>
        <taxon>Euteleostomi</taxon>
        <taxon>Mammalia</taxon>
        <taxon>Eutheria</taxon>
        <taxon>Euarchontoglires</taxon>
        <taxon>Glires</taxon>
        <taxon>Rodentia</taxon>
        <taxon>Myomorpha</taxon>
        <taxon>Muroidea</taxon>
        <taxon>Muridae</taxon>
        <taxon>Murinae</taxon>
        <taxon>Mus</taxon>
        <taxon>Mus</taxon>
    </lineage>
</organism>
<evidence type="ECO:0000250" key="1">
    <source>
        <dbReference type="UniProtKB" id="Q14938"/>
    </source>
</evidence>
<evidence type="ECO:0000255" key="2">
    <source>
        <dbReference type="PROSITE-ProRule" id="PRU00436"/>
    </source>
</evidence>
<evidence type="ECO:0000256" key="3">
    <source>
        <dbReference type="SAM" id="MobiDB-lite"/>
    </source>
</evidence>
<evidence type="ECO:0000269" key="4">
    <source>
    </source>
</evidence>
<evidence type="ECO:0000303" key="5">
    <source>
    </source>
</evidence>
<evidence type="ECO:0000303" key="6">
    <source>
    </source>
</evidence>
<evidence type="ECO:0000303" key="7">
    <source>
    </source>
</evidence>
<evidence type="ECO:0000303" key="8">
    <source>
    </source>
</evidence>
<evidence type="ECO:0000305" key="9"/>
<evidence type="ECO:0007744" key="10">
    <source>
    </source>
</evidence>
<evidence type="ECO:0007744" key="11">
    <source>
    </source>
</evidence>
<evidence type="ECO:0007744" key="12">
    <source>
    </source>
</evidence>
<evidence type="ECO:0007744" key="13">
    <source>
    </source>
</evidence>
<proteinExistence type="evidence at protein level"/>
<protein>
    <recommendedName>
        <fullName>Nuclear factor 1 X-type</fullName>
        <shortName>NF1-X</shortName>
        <shortName>Nuclear factor 1/X</shortName>
    </recommendedName>
    <alternativeName>
        <fullName>CCAAT-box-binding transcription factor</fullName>
        <shortName>CTF</shortName>
    </alternativeName>
    <alternativeName>
        <fullName>Nuclear factor I/X</fullName>
        <shortName>NF-I/X</shortName>
        <shortName>NFI-X</shortName>
    </alternativeName>
    <alternativeName>
        <fullName>TGGCA-binding protein</fullName>
    </alternativeName>
</protein>
<gene>
    <name type="primary">Nfix</name>
</gene>
<sequence length="488" mass="53394">MYSPYCLTQDEFHPFIEALLPHVRAFSYTWFNLQARKRKYFKKHEKRMSKDEERAVKDELLGEKPEIKQKWASRLLAKLRKDIRPEFREDFVLTITGKKPPCCVLSNPDQKGKIRRIDCLRQADKVWRLDLVMVILFKGIPLESTDGERLYKSPQCSNPGLCVQPHHIGVTIKELDLYLAYFVHTPESGQSDSSNQQGDADIKPLPNGHLSFQDCFVTSGVWNVTELVRVSQTPVATASGPNFSLADLESPSYYNINQVTLGRRSITSPPSTSSTKRPKSIDDSEMESPVDDVFYPGTGRSPAAGSSQSSGWPNDVDAGPASLKKSGKLDFCSALSSQGSSPRMAFTHHPLPVLAGVRPGSPRATASALHFPSTSIIQQSSPYFTHPTIRYHHHHGQDSLKEFVQFVCSDGSGQATGQPNGSGQGKVPGSFLLPPPPPVARPVPLPMPDSKTTSTAPDGAALTPPSPSFTTTGASSANRFVGIGPRDG</sequence>
<accession>P70257</accession>
<accession>O08519</accession>
<accession>P70258</accession>
<accession>Q64192</accession>
<accession>Q99L78</accession>
<accession>Q9R1G2</accession>
<dbReference type="EMBL" id="S81451">
    <property type="protein sequence ID" value="AAB36083.2"/>
    <property type="molecule type" value="mRNA"/>
</dbReference>
<dbReference type="EMBL" id="Y07688">
    <property type="protein sequence ID" value="CAA68952.1"/>
    <property type="molecule type" value="mRNA"/>
</dbReference>
<dbReference type="EMBL" id="Y07689">
    <property type="protein sequence ID" value="CAA68953.1"/>
    <property type="molecule type" value="mRNA"/>
</dbReference>
<dbReference type="EMBL" id="BC003766">
    <property type="protein sequence ID" value="AAH03766.1"/>
    <property type="molecule type" value="mRNA"/>
</dbReference>
<dbReference type="EMBL" id="U57636">
    <property type="protein sequence ID" value="AAB49931.1"/>
    <property type="molecule type" value="mRNA"/>
</dbReference>
<dbReference type="EMBL" id="AF111266">
    <property type="protein sequence ID" value="AAD39101.1"/>
    <property type="molecule type" value="Genomic_DNA"/>
</dbReference>
<dbReference type="CCDS" id="CCDS40412.1">
    <molecule id="P70257-2"/>
</dbReference>
<dbReference type="CCDS" id="CCDS40413.1">
    <molecule id="P70257-1"/>
</dbReference>
<dbReference type="RefSeq" id="NP_001075451.1">
    <molecule id="P70257-1"/>
    <property type="nucleotide sequence ID" value="NM_001081982.3"/>
</dbReference>
<dbReference type="RefSeq" id="NP_035036.1">
    <molecule id="P70257-2"/>
    <property type="nucleotide sequence ID" value="NM_010906.4"/>
</dbReference>
<dbReference type="SMR" id="P70257"/>
<dbReference type="BioGRID" id="201750">
    <property type="interactions" value="32"/>
</dbReference>
<dbReference type="FunCoup" id="P70257">
    <property type="interactions" value="1001"/>
</dbReference>
<dbReference type="IntAct" id="P70257">
    <property type="interactions" value="5"/>
</dbReference>
<dbReference type="MINT" id="P70257"/>
<dbReference type="STRING" id="10090.ENSMUSP00000105386"/>
<dbReference type="GlyGen" id="P70257">
    <property type="glycosylation" value="3 sites, 1 O-linked glycan (3 sites)"/>
</dbReference>
<dbReference type="iPTMnet" id="P70257"/>
<dbReference type="PhosphoSitePlus" id="P70257"/>
<dbReference type="jPOST" id="P70257"/>
<dbReference type="PaxDb" id="10090-ENSMUSP00000105386"/>
<dbReference type="PeptideAtlas" id="P70257"/>
<dbReference type="ProteomicsDB" id="287408">
    <molecule id="P70257-3"/>
</dbReference>
<dbReference type="ProteomicsDB" id="287409">
    <molecule id="P70257-1"/>
</dbReference>
<dbReference type="ProteomicsDB" id="287410">
    <molecule id="P70257-2"/>
</dbReference>
<dbReference type="Pumba" id="P70257"/>
<dbReference type="Antibodypedia" id="7151">
    <property type="antibodies" value="135 antibodies from 27 providers"/>
</dbReference>
<dbReference type="DNASU" id="18032"/>
<dbReference type="Ensembl" id="ENSMUST00000076715.13">
    <molecule id="P70257-2"/>
    <property type="protein sequence ID" value="ENSMUSP00000076005.7"/>
    <property type="gene ID" value="ENSMUSG00000001911.17"/>
</dbReference>
<dbReference type="Ensembl" id="ENSMUST00000099070.10">
    <molecule id="P70257-1"/>
    <property type="protein sequence ID" value="ENSMUSP00000096669.4"/>
    <property type="gene ID" value="ENSMUSG00000001911.17"/>
</dbReference>
<dbReference type="GeneID" id="18032"/>
<dbReference type="KEGG" id="mmu:18032"/>
<dbReference type="UCSC" id="uc009mne.2">
    <molecule id="P70257-1"/>
    <property type="organism name" value="mouse"/>
</dbReference>
<dbReference type="UCSC" id="uc009mnf.2">
    <molecule id="P70257-2"/>
    <property type="organism name" value="mouse"/>
</dbReference>
<dbReference type="AGR" id="MGI:97311"/>
<dbReference type="CTD" id="4784"/>
<dbReference type="MGI" id="MGI:97311">
    <property type="gene designation" value="Nfix"/>
</dbReference>
<dbReference type="VEuPathDB" id="HostDB:ENSMUSG00000001911"/>
<dbReference type="eggNOG" id="KOG3663">
    <property type="taxonomic scope" value="Eukaryota"/>
</dbReference>
<dbReference type="GeneTree" id="ENSGT00950000182916"/>
<dbReference type="InParanoid" id="P70257"/>
<dbReference type="OrthoDB" id="10055441at2759"/>
<dbReference type="PhylomeDB" id="P70257"/>
<dbReference type="BioGRID-ORCS" id="18032">
    <property type="hits" value="6 hits in 79 CRISPR screens"/>
</dbReference>
<dbReference type="ChiTaRS" id="Nfix">
    <property type="organism name" value="mouse"/>
</dbReference>
<dbReference type="PRO" id="PR:P70257"/>
<dbReference type="Proteomes" id="UP000000589">
    <property type="component" value="Chromosome 8"/>
</dbReference>
<dbReference type="RNAct" id="P70257">
    <property type="molecule type" value="protein"/>
</dbReference>
<dbReference type="Bgee" id="ENSMUSG00000001911">
    <property type="expression patterns" value="Expressed in rostral migratory stream and 253 other cell types or tissues"/>
</dbReference>
<dbReference type="ExpressionAtlas" id="P70257">
    <property type="expression patterns" value="baseline and differential"/>
</dbReference>
<dbReference type="GO" id="GO:0005634">
    <property type="term" value="C:nucleus"/>
    <property type="evidence" value="ECO:0000314"/>
    <property type="project" value="MGI"/>
</dbReference>
<dbReference type="GO" id="GO:0003682">
    <property type="term" value="F:chromatin binding"/>
    <property type="evidence" value="ECO:0000314"/>
    <property type="project" value="MGI"/>
</dbReference>
<dbReference type="GO" id="GO:0001228">
    <property type="term" value="F:DNA-binding transcription activator activity, RNA polymerase II-specific"/>
    <property type="evidence" value="ECO:0000314"/>
    <property type="project" value="NTNU_SB"/>
</dbReference>
<dbReference type="GO" id="GO:0000978">
    <property type="term" value="F:RNA polymerase II cis-regulatory region sequence-specific DNA binding"/>
    <property type="evidence" value="ECO:0000314"/>
    <property type="project" value="MGI"/>
</dbReference>
<dbReference type="GO" id="GO:0000977">
    <property type="term" value="F:RNA polymerase II transcription regulatory region sequence-specific DNA binding"/>
    <property type="evidence" value="ECO:0000314"/>
    <property type="project" value="NTNU_SB"/>
</dbReference>
<dbReference type="GO" id="GO:0048708">
    <property type="term" value="P:astrocyte differentiation"/>
    <property type="evidence" value="ECO:0000315"/>
    <property type="project" value="MGI"/>
</dbReference>
<dbReference type="GO" id="GO:1905222">
    <property type="term" value="P:atrioventricular canal morphogenesis"/>
    <property type="evidence" value="ECO:0000315"/>
    <property type="project" value="MGI"/>
</dbReference>
<dbReference type="GO" id="GO:0030282">
    <property type="term" value="P:bone mineralization"/>
    <property type="evidence" value="ECO:0000315"/>
    <property type="project" value="MGI"/>
</dbReference>
<dbReference type="GO" id="GO:0007420">
    <property type="term" value="P:brain development"/>
    <property type="evidence" value="ECO:0000315"/>
    <property type="project" value="MGI"/>
</dbReference>
<dbReference type="GO" id="GO:0048854">
    <property type="term" value="P:brain morphogenesis"/>
    <property type="evidence" value="ECO:0000315"/>
    <property type="project" value="MGI"/>
</dbReference>
<dbReference type="GO" id="GO:0043010">
    <property type="term" value="P:camera-type eye development"/>
    <property type="evidence" value="ECO:0000315"/>
    <property type="project" value="MGI"/>
</dbReference>
<dbReference type="GO" id="GO:0048469">
    <property type="term" value="P:cell maturation"/>
    <property type="evidence" value="ECO:0000315"/>
    <property type="project" value="MGI"/>
</dbReference>
<dbReference type="GO" id="GO:0000902">
    <property type="term" value="P:cell morphogenesis"/>
    <property type="evidence" value="ECO:0000315"/>
    <property type="project" value="MGI"/>
</dbReference>
<dbReference type="GO" id="GO:0021846">
    <property type="term" value="P:cell proliferation in forebrain"/>
    <property type="evidence" value="ECO:0000314"/>
    <property type="project" value="MGI"/>
</dbReference>
<dbReference type="GO" id="GO:0071773">
    <property type="term" value="P:cellular response to BMP stimulus"/>
    <property type="evidence" value="ECO:0000315"/>
    <property type="project" value="MGI"/>
</dbReference>
<dbReference type="GO" id="GO:0021696">
    <property type="term" value="P:cerebellar cortex morphogenesis"/>
    <property type="evidence" value="ECO:0000315"/>
    <property type="project" value="MGI"/>
</dbReference>
<dbReference type="GO" id="GO:0021707">
    <property type="term" value="P:cerebellar granule cell differentiation"/>
    <property type="evidence" value="ECO:0000315"/>
    <property type="project" value="MGI"/>
</dbReference>
<dbReference type="GO" id="GO:0021680">
    <property type="term" value="P:cerebellar Purkinje cell layer development"/>
    <property type="evidence" value="ECO:0000315"/>
    <property type="project" value="MGI"/>
</dbReference>
<dbReference type="GO" id="GO:0021549">
    <property type="term" value="P:cerebellum development"/>
    <property type="evidence" value="ECO:0000315"/>
    <property type="project" value="MGI"/>
</dbReference>
<dbReference type="GO" id="GO:0021987">
    <property type="term" value="P:cerebral cortex development"/>
    <property type="evidence" value="ECO:0000315"/>
    <property type="project" value="MGI"/>
</dbReference>
<dbReference type="GO" id="GO:0048668">
    <property type="term" value="P:collateral sprouting"/>
    <property type="evidence" value="ECO:0000315"/>
    <property type="project" value="MGI"/>
</dbReference>
<dbReference type="GO" id="GO:0006260">
    <property type="term" value="P:DNA replication"/>
    <property type="evidence" value="ECO:0007669"/>
    <property type="project" value="UniProtKB-KW"/>
</dbReference>
<dbReference type="GO" id="GO:0043583">
    <property type="term" value="P:ear development"/>
    <property type="evidence" value="ECO:0000315"/>
    <property type="project" value="MGI"/>
</dbReference>
<dbReference type="GO" id="GO:0001958">
    <property type="term" value="P:endochondral ossification"/>
    <property type="evidence" value="ECO:0000315"/>
    <property type="project" value="MGI"/>
</dbReference>
<dbReference type="GO" id="GO:0060429">
    <property type="term" value="P:epithelium development"/>
    <property type="evidence" value="ECO:0000315"/>
    <property type="project" value="MGI"/>
</dbReference>
<dbReference type="GO" id="GO:0010458">
    <property type="term" value="P:exit from mitosis"/>
    <property type="evidence" value="ECO:0000315"/>
    <property type="project" value="MGI"/>
</dbReference>
<dbReference type="GO" id="GO:0030900">
    <property type="term" value="P:forebrain development"/>
    <property type="evidence" value="ECO:0000315"/>
    <property type="project" value="MGI"/>
</dbReference>
<dbReference type="GO" id="GO:0021861">
    <property type="term" value="P:forebrain radial glial cell differentiation"/>
    <property type="evidence" value="ECO:0000315"/>
    <property type="project" value="MGI"/>
</dbReference>
<dbReference type="GO" id="GO:0010467">
    <property type="term" value="P:gene expression"/>
    <property type="evidence" value="ECO:0000314"/>
    <property type="project" value="MGI"/>
</dbReference>
<dbReference type="GO" id="GO:0048699">
    <property type="term" value="P:generation of neurons"/>
    <property type="evidence" value="ECO:0000315"/>
    <property type="project" value="MGI"/>
</dbReference>
<dbReference type="GO" id="GO:0021782">
    <property type="term" value="P:glial cell development"/>
    <property type="evidence" value="ECO:0000315"/>
    <property type="project" value="MGI"/>
</dbReference>
<dbReference type="GO" id="GO:0021780">
    <property type="term" value="P:glial cell fate specification"/>
    <property type="evidence" value="ECO:0000315"/>
    <property type="project" value="MGI"/>
</dbReference>
<dbReference type="GO" id="GO:0014009">
    <property type="term" value="P:glial cell proliferation"/>
    <property type="evidence" value="ECO:0000315"/>
    <property type="project" value="MGI"/>
</dbReference>
<dbReference type="GO" id="GO:0042063">
    <property type="term" value="P:gliogenesis"/>
    <property type="evidence" value="ECO:0000314"/>
    <property type="project" value="MGI"/>
</dbReference>
<dbReference type="GO" id="GO:0021766">
    <property type="term" value="P:hippocampus development"/>
    <property type="evidence" value="ECO:0000315"/>
    <property type="project" value="MGI"/>
</dbReference>
<dbReference type="GO" id="GO:0048873">
    <property type="term" value="P:homeostasis of number of cells within a tissue"/>
    <property type="evidence" value="ECO:0000315"/>
    <property type="project" value="MGI"/>
</dbReference>
<dbReference type="GO" id="GO:0006954">
    <property type="term" value="P:inflammatory response"/>
    <property type="evidence" value="ECO:0000315"/>
    <property type="project" value="MGI"/>
</dbReference>
<dbReference type="GO" id="GO:0021670">
    <property type="term" value="P:lateral ventricle development"/>
    <property type="evidence" value="ECO:0000315"/>
    <property type="project" value="MGI"/>
</dbReference>
<dbReference type="GO" id="GO:0007612">
    <property type="term" value="P:learning"/>
    <property type="evidence" value="ECO:0000315"/>
    <property type="project" value="MGI"/>
</dbReference>
<dbReference type="GO" id="GO:0030225">
    <property type="term" value="P:macrophage differentiation"/>
    <property type="evidence" value="ECO:0000315"/>
    <property type="project" value="MGI"/>
</dbReference>
<dbReference type="GO" id="GO:0007613">
    <property type="term" value="P:memory"/>
    <property type="evidence" value="ECO:0000315"/>
    <property type="project" value="MGI"/>
</dbReference>
<dbReference type="GO" id="GO:0035264">
    <property type="term" value="P:multicellular organism growth"/>
    <property type="evidence" value="ECO:0000315"/>
    <property type="project" value="MGI"/>
</dbReference>
<dbReference type="GO" id="GO:0043524">
    <property type="term" value="P:negative regulation of neuron apoptotic process"/>
    <property type="evidence" value="ECO:0000315"/>
    <property type="project" value="MGI"/>
</dbReference>
<dbReference type="GO" id="GO:0000122">
    <property type="term" value="P:negative regulation of transcription by RNA polymerase II"/>
    <property type="evidence" value="ECO:0000314"/>
    <property type="project" value="UniProtKB"/>
</dbReference>
<dbReference type="GO" id="GO:0061351">
    <property type="term" value="P:neural precursor cell proliferation"/>
    <property type="evidence" value="ECO:0000315"/>
    <property type="project" value="MGI"/>
</dbReference>
<dbReference type="GO" id="GO:0014016">
    <property type="term" value="P:neuroblast differentiation"/>
    <property type="evidence" value="ECO:0000315"/>
    <property type="project" value="MGI"/>
</dbReference>
<dbReference type="GO" id="GO:0097402">
    <property type="term" value="P:neuroblast migration"/>
    <property type="evidence" value="ECO:0000315"/>
    <property type="project" value="MGI"/>
</dbReference>
<dbReference type="GO" id="GO:0007405">
    <property type="term" value="P:neuroblast proliferation"/>
    <property type="evidence" value="ECO:0000315"/>
    <property type="project" value="MGI"/>
</dbReference>
<dbReference type="GO" id="GO:0022008">
    <property type="term" value="P:neurogenesis"/>
    <property type="evidence" value="ECO:0000315"/>
    <property type="project" value="MGI"/>
</dbReference>
<dbReference type="GO" id="GO:0030182">
    <property type="term" value="P:neuron differentiation"/>
    <property type="evidence" value="ECO:0000315"/>
    <property type="project" value="MGI"/>
</dbReference>
<dbReference type="GO" id="GO:0048665">
    <property type="term" value="P:neuron fate specification"/>
    <property type="evidence" value="ECO:0000315"/>
    <property type="project" value="MGI"/>
</dbReference>
<dbReference type="GO" id="GO:0021772">
    <property type="term" value="P:olfactory bulb development"/>
    <property type="evidence" value="ECO:0000315"/>
    <property type="project" value="MGI"/>
</dbReference>
<dbReference type="GO" id="GO:0048709">
    <property type="term" value="P:oligodendrocyte differentiation"/>
    <property type="evidence" value="ECO:0000315"/>
    <property type="project" value="MGI"/>
</dbReference>
<dbReference type="GO" id="GO:0030316">
    <property type="term" value="P:osteoclast differentiation"/>
    <property type="evidence" value="ECO:0000314"/>
    <property type="project" value="MGI"/>
</dbReference>
<dbReference type="GO" id="GO:0002158">
    <property type="term" value="P:osteoclast proliferation"/>
    <property type="evidence" value="ECO:0000314"/>
    <property type="project" value="MGI"/>
</dbReference>
<dbReference type="GO" id="GO:0006909">
    <property type="term" value="P:phagocytosis"/>
    <property type="evidence" value="ECO:0000315"/>
    <property type="project" value="MGI"/>
</dbReference>
<dbReference type="GO" id="GO:0045944">
    <property type="term" value="P:positive regulation of transcription by RNA polymerase II"/>
    <property type="evidence" value="ECO:0000314"/>
    <property type="project" value="NTNU_SB"/>
</dbReference>
<dbReference type="GO" id="GO:0031099">
    <property type="term" value="P:regeneration"/>
    <property type="evidence" value="ECO:0000315"/>
    <property type="project" value="MGI"/>
</dbReference>
<dbReference type="GO" id="GO:0009611">
    <property type="term" value="P:response to wounding"/>
    <property type="evidence" value="ECO:0000315"/>
    <property type="project" value="MGI"/>
</dbReference>
<dbReference type="GO" id="GO:0060041">
    <property type="term" value="P:retina development in camera-type eye"/>
    <property type="evidence" value="ECO:0000315"/>
    <property type="project" value="MGI"/>
</dbReference>
<dbReference type="GO" id="GO:0007266">
    <property type="term" value="P:Rho protein signal transduction"/>
    <property type="evidence" value="ECO:0000315"/>
    <property type="project" value="MGI"/>
</dbReference>
<dbReference type="GO" id="GO:0014816">
    <property type="term" value="P:skeletal muscle satellite cell differentiation"/>
    <property type="evidence" value="ECO:0000315"/>
    <property type="project" value="MGI"/>
</dbReference>
<dbReference type="GO" id="GO:0007519">
    <property type="term" value="P:skeletal muscle tissue development"/>
    <property type="evidence" value="ECO:0000315"/>
    <property type="project" value="MGI"/>
</dbReference>
<dbReference type="GO" id="GO:0043403">
    <property type="term" value="P:skeletal muscle tissue regeneration"/>
    <property type="evidence" value="ECO:0000315"/>
    <property type="project" value="MGI"/>
</dbReference>
<dbReference type="GO" id="GO:0001501">
    <property type="term" value="P:skeletal system development"/>
    <property type="evidence" value="ECO:0000315"/>
    <property type="project" value="MGI"/>
</dbReference>
<dbReference type="GO" id="GO:0035176">
    <property type="term" value="P:social behavior"/>
    <property type="evidence" value="ECO:0000315"/>
    <property type="project" value="MGI"/>
</dbReference>
<dbReference type="GO" id="GO:0021510">
    <property type="term" value="P:spinal cord development"/>
    <property type="evidence" value="ECO:0000315"/>
    <property type="project" value="MGI"/>
</dbReference>
<dbReference type="GO" id="GO:0019827">
    <property type="term" value="P:stem cell population maintenance"/>
    <property type="evidence" value="ECO:0000315"/>
    <property type="project" value="MGI"/>
</dbReference>
<dbReference type="GO" id="GO:0001894">
    <property type="term" value="P:tissue homeostasis"/>
    <property type="evidence" value="ECO:0000315"/>
    <property type="project" value="MGI"/>
</dbReference>
<dbReference type="GO" id="GO:0006366">
    <property type="term" value="P:transcription by RNA polymerase II"/>
    <property type="evidence" value="ECO:0000314"/>
    <property type="project" value="MGI"/>
</dbReference>
<dbReference type="InterPro" id="IPR000647">
    <property type="entry name" value="CTF/NFI"/>
</dbReference>
<dbReference type="InterPro" id="IPR020604">
    <property type="entry name" value="CTF/NFI_DNA-bd-dom"/>
</dbReference>
<dbReference type="InterPro" id="IPR019739">
    <property type="entry name" value="CTF/NFI_DNA-bd_CS"/>
</dbReference>
<dbReference type="InterPro" id="IPR019548">
    <property type="entry name" value="CTF/NFI_DNA-bd_N"/>
</dbReference>
<dbReference type="InterPro" id="IPR003619">
    <property type="entry name" value="MAD_homology1_Dwarfin-type"/>
</dbReference>
<dbReference type="PANTHER" id="PTHR11492:SF3">
    <property type="entry name" value="NUCLEAR FACTOR 1 X-TYPE"/>
    <property type="match status" value="1"/>
</dbReference>
<dbReference type="PANTHER" id="PTHR11492">
    <property type="entry name" value="NUCLEAR FACTOR I"/>
    <property type="match status" value="1"/>
</dbReference>
<dbReference type="Pfam" id="PF00859">
    <property type="entry name" value="CTF_NFI"/>
    <property type="match status" value="1"/>
</dbReference>
<dbReference type="Pfam" id="PF03165">
    <property type="entry name" value="MH1"/>
    <property type="match status" value="1"/>
</dbReference>
<dbReference type="Pfam" id="PF10524">
    <property type="entry name" value="NfI_DNAbd_pre-N"/>
    <property type="match status" value="1"/>
</dbReference>
<dbReference type="SMART" id="SM00523">
    <property type="entry name" value="DWA"/>
    <property type="match status" value="1"/>
</dbReference>
<dbReference type="PROSITE" id="PS00349">
    <property type="entry name" value="CTF_NFI_1"/>
    <property type="match status" value="1"/>
</dbReference>
<dbReference type="PROSITE" id="PS51080">
    <property type="entry name" value="CTF_NFI_2"/>
    <property type="match status" value="1"/>
</dbReference>
<keyword id="KW-0010">Activator</keyword>
<keyword id="KW-0025">Alternative splicing</keyword>
<keyword id="KW-0235">DNA replication</keyword>
<keyword id="KW-0238">DNA-binding</keyword>
<keyword id="KW-1017">Isopeptide bond</keyword>
<keyword id="KW-0488">Methylation</keyword>
<keyword id="KW-0539">Nucleus</keyword>
<keyword id="KW-0597">Phosphoprotein</keyword>
<keyword id="KW-1185">Reference proteome</keyword>
<keyword id="KW-0678">Repressor</keyword>
<keyword id="KW-0804">Transcription</keyword>
<keyword id="KW-0805">Transcription regulation</keyword>
<keyword id="KW-0832">Ubl conjugation</keyword>
<comment type="function">
    <text evidence="4">Recognizes and binds the palindromic sequence 5'-TTGGCNNNNNGCCAA-3' present in viral and cellular promoters and in the origin of replication of adenovirus type 2. These proteins are individually capable of activating transcription and replication. Isoform NFIX1 acts as a transcriptional activator while isoform NFIX3 acts as a repressor.</text>
</comment>
<comment type="subunit">
    <text>Binds DNA as a homodimer.</text>
</comment>
<comment type="interaction">
    <interactant intactId="EBI-2639084">
        <id>P70257-2</id>
    </interactant>
    <interactant intactId="EBI-2639094">
        <id>Q60929</id>
        <label>Mef2a</label>
    </interactant>
    <organismsDiffer>false</organismsDiffer>
    <experiments>2</experiments>
</comment>
<comment type="interaction">
    <interactant intactId="EBI-2639084">
        <id>P70257-2</id>
    </interactant>
    <interactant intactId="EBI-2639157">
        <id>Q02111</id>
        <label>Prkcq</label>
    </interactant>
    <organismsDiffer>false</organismsDiffer>
    <experiments>3</experiments>
</comment>
<comment type="interaction">
    <interactant intactId="EBI-2639084">
        <id>P70257-2</id>
    </interactant>
    <interactant intactId="EBI-2656305">
        <id>Q02078</id>
        <label>MEF2A</label>
    </interactant>
    <organismsDiffer>true</organismsDiffer>
    <experiments>2</experiments>
</comment>
<comment type="subcellular location">
    <subcellularLocation>
        <location>Nucleus</location>
    </subcellularLocation>
</comment>
<comment type="alternative products">
    <event type="alternative splicing"/>
    <isoform>
        <id>P70257-3</id>
        <name>NFIX3</name>
        <sequence type="displayed"/>
    </isoform>
    <isoform>
        <id>P70257-1</id>
        <name>NFIX1</name>
        <sequence type="described" ref="VSP_007546 VSP_007547"/>
    </isoform>
    <isoform>
        <id>P70257-2</id>
        <name>NFIX2</name>
        <sequence type="described" ref="VSP_003563 VSP_007546 VSP_007547"/>
    </isoform>
</comment>
<comment type="domain">
    <text evidence="1">The 9aaTAD motif is a transactivation domain present in a large number of yeast and animal transcription factors.</text>
</comment>
<comment type="similarity">
    <text evidence="2">Belongs to the CTF/NF-I family.</text>
</comment>
<name>NFIX_MOUSE</name>